<protein>
    <recommendedName>
        <fullName evidence="7">H-2 class II histocompatibility antigen gamma chain</fullName>
    </recommendedName>
    <alternativeName>
        <fullName>Ia antigen-associated invariant chain</fullName>
        <shortName>Ii</shortName>
    </alternativeName>
    <alternativeName>
        <fullName>MHC class II-associated invariant chain</fullName>
    </alternativeName>
    <cdAntigenName>CD74</cdAntigenName>
    <component>
        <recommendedName>
            <fullName evidence="2">Class-II-associated invariant chain peptide</fullName>
            <shortName evidence="2">CLIP</shortName>
        </recommendedName>
    </component>
</protein>
<organism>
    <name type="scientific">Rattus norvegicus</name>
    <name type="common">Rat</name>
    <dbReference type="NCBI Taxonomy" id="10116"/>
    <lineage>
        <taxon>Eukaryota</taxon>
        <taxon>Metazoa</taxon>
        <taxon>Chordata</taxon>
        <taxon>Craniata</taxon>
        <taxon>Vertebrata</taxon>
        <taxon>Euteleostomi</taxon>
        <taxon>Mammalia</taxon>
        <taxon>Eutheria</taxon>
        <taxon>Euarchontoglires</taxon>
        <taxon>Glires</taxon>
        <taxon>Rodentia</taxon>
        <taxon>Myomorpha</taxon>
        <taxon>Muroidea</taxon>
        <taxon>Muridae</taxon>
        <taxon>Murinae</taxon>
        <taxon>Rattus</taxon>
    </lineage>
</organism>
<dbReference type="EMBL" id="X14254">
    <property type="protein sequence ID" value="CAA32468.1"/>
    <property type="molecule type" value="mRNA"/>
</dbReference>
<dbReference type="EMBL" id="X13044">
    <property type="protein sequence ID" value="CAA31450.1"/>
    <property type="molecule type" value="mRNA"/>
</dbReference>
<dbReference type="PIR" id="S04362">
    <property type="entry name" value="S04362"/>
</dbReference>
<dbReference type="RefSeq" id="NP_037201.1">
    <molecule id="P10247-2"/>
    <property type="nucleotide sequence ID" value="NM_013069.2"/>
</dbReference>
<dbReference type="RefSeq" id="XP_006254823.1">
    <molecule id="P10247-1"/>
    <property type="nucleotide sequence ID" value="XM_006254761.5"/>
</dbReference>
<dbReference type="SMR" id="P10247"/>
<dbReference type="FunCoup" id="P10247">
    <property type="interactions" value="465"/>
</dbReference>
<dbReference type="STRING" id="10116.ENSRNOP00000025354"/>
<dbReference type="MEROPS" id="I31.002"/>
<dbReference type="GlyCosmos" id="P10247">
    <property type="glycosylation" value="3 sites, No reported glycans"/>
</dbReference>
<dbReference type="GlyGen" id="P10247">
    <property type="glycosylation" value="3 sites"/>
</dbReference>
<dbReference type="iPTMnet" id="P10247"/>
<dbReference type="PhosphoSitePlus" id="P10247"/>
<dbReference type="PaxDb" id="10116-ENSRNOP00000025354"/>
<dbReference type="Ensembl" id="ENSRNOT00000025344.6">
    <molecule id="P10247-1"/>
    <property type="protein sequence ID" value="ENSRNOP00000025342.4"/>
    <property type="gene ID" value="ENSRNOG00000018735.8"/>
</dbReference>
<dbReference type="GeneID" id="25599"/>
<dbReference type="KEGG" id="rno:25599"/>
<dbReference type="UCSC" id="RGD:2313">
    <molecule id="P10247-1"/>
    <property type="organism name" value="rat"/>
</dbReference>
<dbReference type="AGR" id="RGD:2313"/>
<dbReference type="CTD" id="972"/>
<dbReference type="RGD" id="2313">
    <property type="gene designation" value="Cd74"/>
</dbReference>
<dbReference type="eggNOG" id="KOG1214">
    <property type="taxonomic scope" value="Eukaryota"/>
</dbReference>
<dbReference type="GeneTree" id="ENSGT00390000008961"/>
<dbReference type="HOGENOM" id="CLU_086066_1_0_1"/>
<dbReference type="InParanoid" id="P10247"/>
<dbReference type="OMA" id="HHNCSEP"/>
<dbReference type="OrthoDB" id="3410at9989"/>
<dbReference type="PhylomeDB" id="P10247"/>
<dbReference type="TreeFam" id="TF317779"/>
<dbReference type="Reactome" id="R-RNO-202733">
    <property type="pathway name" value="Cell surface interactions at the vascular wall"/>
</dbReference>
<dbReference type="Reactome" id="R-RNO-2132295">
    <property type="pathway name" value="MHC class II antigen presentation"/>
</dbReference>
<dbReference type="CD-CODE" id="246D7041">
    <property type="entry name" value="Chromatoid body"/>
</dbReference>
<dbReference type="PRO" id="PR:P10247"/>
<dbReference type="Proteomes" id="UP000002494">
    <property type="component" value="Chromosome 18"/>
</dbReference>
<dbReference type="Bgee" id="ENSRNOG00000018735">
    <property type="expression patterns" value="Expressed in spleen and 20 other cell types or tissues"/>
</dbReference>
<dbReference type="ExpressionAtlas" id="P10247">
    <property type="expression patterns" value="baseline and differential"/>
</dbReference>
<dbReference type="GO" id="GO:0009986">
    <property type="term" value="C:cell surface"/>
    <property type="evidence" value="ECO:0000266"/>
    <property type="project" value="RGD"/>
</dbReference>
<dbReference type="GO" id="GO:0005737">
    <property type="term" value="C:cytoplasm"/>
    <property type="evidence" value="ECO:0000266"/>
    <property type="project" value="RGD"/>
</dbReference>
<dbReference type="GO" id="GO:0005783">
    <property type="term" value="C:endoplasmic reticulum"/>
    <property type="evidence" value="ECO:0000266"/>
    <property type="project" value="RGD"/>
</dbReference>
<dbReference type="GO" id="GO:0005789">
    <property type="term" value="C:endoplasmic reticulum membrane"/>
    <property type="evidence" value="ECO:0007669"/>
    <property type="project" value="UniProtKB-SubCell"/>
</dbReference>
<dbReference type="GO" id="GO:0009897">
    <property type="term" value="C:external side of plasma membrane"/>
    <property type="evidence" value="ECO:0000266"/>
    <property type="project" value="RGD"/>
</dbReference>
<dbReference type="GO" id="GO:0005576">
    <property type="term" value="C:extracellular region"/>
    <property type="evidence" value="ECO:0007669"/>
    <property type="project" value="UniProtKB-SubCell"/>
</dbReference>
<dbReference type="GO" id="GO:0005794">
    <property type="term" value="C:Golgi apparatus"/>
    <property type="evidence" value="ECO:0000266"/>
    <property type="project" value="RGD"/>
</dbReference>
<dbReference type="GO" id="GO:0005770">
    <property type="term" value="C:late endosome"/>
    <property type="evidence" value="ECO:0000250"/>
    <property type="project" value="UniProtKB"/>
</dbReference>
<dbReference type="GO" id="GO:0005764">
    <property type="term" value="C:lysosome"/>
    <property type="evidence" value="ECO:0000250"/>
    <property type="project" value="UniProtKB"/>
</dbReference>
<dbReference type="GO" id="GO:0035692">
    <property type="term" value="C:macrophage migration inhibitory factor receptor complex"/>
    <property type="evidence" value="ECO:0000250"/>
    <property type="project" value="BHF-UCL"/>
</dbReference>
<dbReference type="GO" id="GO:0016020">
    <property type="term" value="C:membrane"/>
    <property type="evidence" value="ECO:0000266"/>
    <property type="project" value="RGD"/>
</dbReference>
<dbReference type="GO" id="GO:0042613">
    <property type="term" value="C:MHC class II protein complex"/>
    <property type="evidence" value="ECO:0000266"/>
    <property type="project" value="RGD"/>
</dbReference>
<dbReference type="GO" id="GO:0005771">
    <property type="term" value="C:multivesicular body"/>
    <property type="evidence" value="ECO:0000266"/>
    <property type="project" value="RGD"/>
</dbReference>
<dbReference type="GO" id="GO:0035693">
    <property type="term" value="C:NOS2-CD74 complex"/>
    <property type="evidence" value="ECO:0000250"/>
    <property type="project" value="BHF-UCL"/>
</dbReference>
<dbReference type="GO" id="GO:0005634">
    <property type="term" value="C:nucleus"/>
    <property type="evidence" value="ECO:0000266"/>
    <property type="project" value="RGD"/>
</dbReference>
<dbReference type="GO" id="GO:0005886">
    <property type="term" value="C:plasma membrane"/>
    <property type="evidence" value="ECO:0000266"/>
    <property type="project" value="RGD"/>
</dbReference>
<dbReference type="GO" id="GO:0032991">
    <property type="term" value="C:protein-containing complex"/>
    <property type="evidence" value="ECO:0000266"/>
    <property type="project" value="RGD"/>
</dbReference>
<dbReference type="GO" id="GO:0005773">
    <property type="term" value="C:vacuole"/>
    <property type="evidence" value="ECO:0000266"/>
    <property type="project" value="RGD"/>
</dbReference>
<dbReference type="GO" id="GO:0001540">
    <property type="term" value="F:amyloid-beta binding"/>
    <property type="evidence" value="ECO:0000266"/>
    <property type="project" value="RGD"/>
</dbReference>
<dbReference type="GO" id="GO:0042609">
    <property type="term" value="F:CD4 receptor binding"/>
    <property type="evidence" value="ECO:0000266"/>
    <property type="project" value="RGD"/>
</dbReference>
<dbReference type="GO" id="GO:0019955">
    <property type="term" value="F:cytokine binding"/>
    <property type="evidence" value="ECO:0000266"/>
    <property type="project" value="RGD"/>
</dbReference>
<dbReference type="GO" id="GO:0004896">
    <property type="term" value="F:cytokine receptor activity"/>
    <property type="evidence" value="ECO:0000250"/>
    <property type="project" value="BHF-UCL"/>
</dbReference>
<dbReference type="GO" id="GO:0035718">
    <property type="term" value="F:macrophage migration inhibitory factor binding"/>
    <property type="evidence" value="ECO:0000266"/>
    <property type="project" value="RGD"/>
</dbReference>
<dbReference type="GO" id="GO:0042289">
    <property type="term" value="F:MHC class II protein binding"/>
    <property type="evidence" value="ECO:0000266"/>
    <property type="project" value="RGD"/>
</dbReference>
<dbReference type="GO" id="GO:0042658">
    <property type="term" value="F:MHC class II protein binding, via antigen binding groove"/>
    <property type="evidence" value="ECO:0000266"/>
    <property type="project" value="RGD"/>
</dbReference>
<dbReference type="GO" id="GO:0023026">
    <property type="term" value="F:MHC class II protein complex binding"/>
    <property type="evidence" value="ECO:0000266"/>
    <property type="project" value="RGD"/>
</dbReference>
<dbReference type="GO" id="GO:0050998">
    <property type="term" value="F:nitric-oxide synthase binding"/>
    <property type="evidence" value="ECO:0000250"/>
    <property type="project" value="BHF-UCL"/>
</dbReference>
<dbReference type="GO" id="GO:0044183">
    <property type="term" value="F:protein folding chaperone"/>
    <property type="evidence" value="ECO:0000266"/>
    <property type="project" value="RGD"/>
</dbReference>
<dbReference type="GO" id="GO:0019882">
    <property type="term" value="P:antigen processing and presentation"/>
    <property type="evidence" value="ECO:0000266"/>
    <property type="project" value="RGD"/>
</dbReference>
<dbReference type="GO" id="GO:0019886">
    <property type="term" value="P:antigen processing and presentation of exogenous peptide antigen via MHC class II"/>
    <property type="evidence" value="ECO:0000266"/>
    <property type="project" value="RGD"/>
</dbReference>
<dbReference type="GO" id="GO:0007249">
    <property type="term" value="P:canonical NF-kappaB signal transduction"/>
    <property type="evidence" value="ECO:0000266"/>
    <property type="project" value="RGD"/>
</dbReference>
<dbReference type="GO" id="GO:0051085">
    <property type="term" value="P:chaperone cofactor-dependent protein refolding"/>
    <property type="evidence" value="ECO:0000266"/>
    <property type="project" value="RGD"/>
</dbReference>
<dbReference type="GO" id="GO:0006952">
    <property type="term" value="P:defense response"/>
    <property type="evidence" value="ECO:0000266"/>
    <property type="project" value="RGD"/>
</dbReference>
<dbReference type="GO" id="GO:0016064">
    <property type="term" value="P:immunoglobulin mediated immune response"/>
    <property type="evidence" value="ECO:0000266"/>
    <property type="project" value="RGD"/>
</dbReference>
<dbReference type="GO" id="GO:0006886">
    <property type="term" value="P:intracellular protein transport"/>
    <property type="evidence" value="ECO:0000266"/>
    <property type="project" value="RGD"/>
</dbReference>
<dbReference type="GO" id="GO:0035691">
    <property type="term" value="P:macrophage migration inhibitory factor signaling pathway"/>
    <property type="evidence" value="ECO:0000250"/>
    <property type="project" value="BHF-UCL"/>
</dbReference>
<dbReference type="GO" id="GO:0043066">
    <property type="term" value="P:negative regulation of apoptotic process"/>
    <property type="evidence" value="ECO:0000250"/>
    <property type="project" value="UniProtKB"/>
</dbReference>
<dbReference type="GO" id="GO:0030336">
    <property type="term" value="P:negative regulation of cell migration"/>
    <property type="evidence" value="ECO:0000266"/>
    <property type="project" value="RGD"/>
</dbReference>
<dbReference type="GO" id="GO:0043518">
    <property type="term" value="P:negative regulation of DNA damage response, signal transduction by p53 class mediator"/>
    <property type="evidence" value="ECO:0000250"/>
    <property type="project" value="BHF-UCL"/>
</dbReference>
<dbReference type="GO" id="GO:1902166">
    <property type="term" value="P:negative regulation of intrinsic apoptotic signaling pathway in response to DNA damage by p53 class mediator"/>
    <property type="evidence" value="ECO:0000250"/>
    <property type="project" value="BHF-UCL"/>
</dbReference>
<dbReference type="GO" id="GO:0002906">
    <property type="term" value="P:negative regulation of mature B cell apoptotic process"/>
    <property type="evidence" value="ECO:0000250"/>
    <property type="project" value="BHF-UCL"/>
</dbReference>
<dbReference type="GO" id="GO:0002792">
    <property type="term" value="P:negative regulation of peptide secretion"/>
    <property type="evidence" value="ECO:0000266"/>
    <property type="project" value="RGD"/>
</dbReference>
<dbReference type="GO" id="GO:0045581">
    <property type="term" value="P:negative regulation of T cell differentiation"/>
    <property type="evidence" value="ECO:0000266"/>
    <property type="project" value="RGD"/>
</dbReference>
<dbReference type="GO" id="GO:0045060">
    <property type="term" value="P:negative thymic T cell selection"/>
    <property type="evidence" value="ECO:0000266"/>
    <property type="project" value="RGD"/>
</dbReference>
<dbReference type="GO" id="GO:0030890">
    <property type="term" value="P:positive regulation of B cell proliferation"/>
    <property type="evidence" value="ECO:0000266"/>
    <property type="project" value="RGD"/>
</dbReference>
<dbReference type="GO" id="GO:0043123">
    <property type="term" value="P:positive regulation of canonical NF-kappaB signal transduction"/>
    <property type="evidence" value="ECO:0000266"/>
    <property type="project" value="RGD"/>
</dbReference>
<dbReference type="GO" id="GO:2000343">
    <property type="term" value="P:positive regulation of chemokine (C-X-C motif) ligand 2 production"/>
    <property type="evidence" value="ECO:0000250"/>
    <property type="project" value="BHF-UCL"/>
</dbReference>
<dbReference type="GO" id="GO:0032722">
    <property type="term" value="P:positive regulation of chemokine production"/>
    <property type="evidence" value="ECO:0000266"/>
    <property type="project" value="RGD"/>
</dbReference>
<dbReference type="GO" id="GO:1900017">
    <property type="term" value="P:positive regulation of cytokine production involved in inflammatory response"/>
    <property type="evidence" value="ECO:0000266"/>
    <property type="project" value="RGD"/>
</dbReference>
<dbReference type="GO" id="GO:0001961">
    <property type="term" value="P:positive regulation of cytokine-mediated signaling pathway"/>
    <property type="evidence" value="ECO:0000250"/>
    <property type="project" value="BHF-UCL"/>
</dbReference>
<dbReference type="GO" id="GO:0002606">
    <property type="term" value="P:positive regulation of dendritic cell antigen processing and presentation"/>
    <property type="evidence" value="ECO:0000250"/>
    <property type="project" value="BHF-UCL"/>
</dbReference>
<dbReference type="GO" id="GO:0045893">
    <property type="term" value="P:positive regulation of DNA-templated transcription"/>
    <property type="evidence" value="ECO:0000266"/>
    <property type="project" value="RGD"/>
</dbReference>
<dbReference type="GO" id="GO:0070374">
    <property type="term" value="P:positive regulation of ERK1 and ERK2 cascade"/>
    <property type="evidence" value="ECO:0000250"/>
    <property type="project" value="BHF-UCL"/>
</dbReference>
<dbReference type="GO" id="GO:0048146">
    <property type="term" value="P:positive regulation of fibroblast proliferation"/>
    <property type="evidence" value="ECO:0000266"/>
    <property type="project" value="RGD"/>
</dbReference>
<dbReference type="GO" id="GO:0010628">
    <property type="term" value="P:positive regulation of gene expression"/>
    <property type="evidence" value="ECO:0000266"/>
    <property type="project" value="RGD"/>
</dbReference>
<dbReference type="GO" id="GO:0050729">
    <property type="term" value="P:positive regulation of inflammatory response"/>
    <property type="evidence" value="ECO:0000266"/>
    <property type="project" value="RGD"/>
</dbReference>
<dbReference type="GO" id="GO:0032755">
    <property type="term" value="P:positive regulation of interleukin-6 production"/>
    <property type="evidence" value="ECO:0000266"/>
    <property type="project" value="RGD"/>
</dbReference>
<dbReference type="GO" id="GO:0032757">
    <property type="term" value="P:positive regulation of interleukin-8 production"/>
    <property type="evidence" value="ECO:0000266"/>
    <property type="project" value="RGD"/>
</dbReference>
<dbReference type="GO" id="GO:0060907">
    <property type="term" value="P:positive regulation of macrophage cytokine production"/>
    <property type="evidence" value="ECO:0000250"/>
    <property type="project" value="BHF-UCL"/>
</dbReference>
<dbReference type="GO" id="GO:2000448">
    <property type="term" value="P:positive regulation of macrophage migration inhibitory factor signaling pathway"/>
    <property type="evidence" value="ECO:0000266"/>
    <property type="project" value="RGD"/>
</dbReference>
<dbReference type="GO" id="GO:0043410">
    <property type="term" value="P:positive regulation of MAPK cascade"/>
    <property type="evidence" value="ECO:0000314"/>
    <property type="project" value="RGD"/>
</dbReference>
<dbReference type="GO" id="GO:0045657">
    <property type="term" value="P:positive regulation of monocyte differentiation"/>
    <property type="evidence" value="ECO:0000266"/>
    <property type="project" value="RGD"/>
</dbReference>
<dbReference type="GO" id="GO:0090023">
    <property type="term" value="P:positive regulation of neutrophil chemotaxis"/>
    <property type="evidence" value="ECO:0000250"/>
    <property type="project" value="BHF-UCL"/>
</dbReference>
<dbReference type="GO" id="GO:1901224">
    <property type="term" value="P:positive regulation of non-canonical NF-kappaB signal transduction"/>
    <property type="evidence" value="ECO:0000266"/>
    <property type="project" value="RGD"/>
</dbReference>
<dbReference type="GO" id="GO:0031394">
    <property type="term" value="P:positive regulation of prostaglandin biosynthetic process"/>
    <property type="evidence" value="ECO:0000266"/>
    <property type="project" value="RGD"/>
</dbReference>
<dbReference type="GO" id="GO:0045582">
    <property type="term" value="P:positive regulation of T cell differentiation"/>
    <property type="evidence" value="ECO:0000266"/>
    <property type="project" value="RGD"/>
</dbReference>
<dbReference type="GO" id="GO:0002830">
    <property type="term" value="P:positive regulation of type 2 immune response"/>
    <property type="evidence" value="ECO:0000266"/>
    <property type="project" value="RGD"/>
</dbReference>
<dbReference type="GO" id="GO:0046598">
    <property type="term" value="P:positive regulation of viral entry into host cell"/>
    <property type="evidence" value="ECO:0000266"/>
    <property type="project" value="RGD"/>
</dbReference>
<dbReference type="GO" id="GO:0045059">
    <property type="term" value="P:positive thymic T cell selection"/>
    <property type="evidence" value="ECO:0000266"/>
    <property type="project" value="RGD"/>
</dbReference>
<dbReference type="GO" id="GO:0001516">
    <property type="term" value="P:prostaglandin biosynthetic process"/>
    <property type="evidence" value="ECO:0000250"/>
    <property type="project" value="UniProtKB"/>
</dbReference>
<dbReference type="GO" id="GO:0050821">
    <property type="term" value="P:protein stabilization"/>
    <property type="evidence" value="ECO:0000250"/>
    <property type="project" value="UniProtKB"/>
</dbReference>
<dbReference type="GO" id="GO:0070206">
    <property type="term" value="P:protein trimerization"/>
    <property type="evidence" value="ECO:0007669"/>
    <property type="project" value="InterPro"/>
</dbReference>
<dbReference type="GO" id="GO:0065003">
    <property type="term" value="P:protein-containing complex assembly"/>
    <property type="evidence" value="ECO:0000266"/>
    <property type="project" value="RGD"/>
</dbReference>
<dbReference type="GO" id="GO:0034341">
    <property type="term" value="P:response to type II interferon"/>
    <property type="evidence" value="ECO:0000266"/>
    <property type="project" value="RGD"/>
</dbReference>
<dbReference type="GO" id="GO:0023019">
    <property type="term" value="P:signal transduction involved in regulation of gene expression"/>
    <property type="evidence" value="ECO:0000266"/>
    <property type="project" value="RGD"/>
</dbReference>
<dbReference type="GO" id="GO:0002286">
    <property type="term" value="P:T cell activation involved in immune response"/>
    <property type="evidence" value="ECO:0000318"/>
    <property type="project" value="GO_Central"/>
</dbReference>
<dbReference type="CDD" id="cd00191">
    <property type="entry name" value="TY"/>
    <property type="match status" value="1"/>
</dbReference>
<dbReference type="FunFam" id="1.10.870.10:FF:000001">
    <property type="entry name" value="HLA class II histocompatibility antigen gamma chain"/>
    <property type="match status" value="1"/>
</dbReference>
<dbReference type="FunFam" id="4.10.800.10:FF:000001">
    <property type="entry name" value="Testican-3 isoform 2"/>
    <property type="match status" value="1"/>
</dbReference>
<dbReference type="Gene3D" id="1.10.870.10">
    <property type="entry name" value="MHC class II-associated invariant chain, trimerisation domain"/>
    <property type="match status" value="1"/>
</dbReference>
<dbReference type="Gene3D" id="4.10.800.10">
    <property type="entry name" value="Thyroglobulin type-1"/>
    <property type="match status" value="1"/>
</dbReference>
<dbReference type="InterPro" id="IPR043530">
    <property type="entry name" value="CD74_antigen"/>
</dbReference>
<dbReference type="InterPro" id="IPR052001">
    <property type="entry name" value="MHC-II_Gamma/Thyroglobulin"/>
</dbReference>
<dbReference type="InterPro" id="IPR015386">
    <property type="entry name" value="MHC_II-assoc_invar/CLIP_MHC-bd"/>
</dbReference>
<dbReference type="InterPro" id="IPR022339">
    <property type="entry name" value="MHC_II-assoc_invar_chain"/>
</dbReference>
<dbReference type="InterPro" id="IPR011988">
    <property type="entry name" value="MHC_II-assoc_invariant_trimer"/>
</dbReference>
<dbReference type="InterPro" id="IPR036613">
    <property type="entry name" value="MHCII_invariant_trimer_sf"/>
</dbReference>
<dbReference type="InterPro" id="IPR000716">
    <property type="entry name" value="Thyroglobulin_1"/>
</dbReference>
<dbReference type="InterPro" id="IPR036857">
    <property type="entry name" value="Thyroglobulin_1_sf"/>
</dbReference>
<dbReference type="PANTHER" id="PTHR14093">
    <property type="entry name" value="HLA CLASS II GAMMA CHAIN"/>
    <property type="match status" value="1"/>
</dbReference>
<dbReference type="PANTHER" id="PTHR14093:SF17">
    <property type="entry name" value="HLA CLASS II HISTOCOMPATIBILITY ANTIGEN GAMMA CHAIN"/>
    <property type="match status" value="1"/>
</dbReference>
<dbReference type="Pfam" id="PF09307">
    <property type="entry name" value="MHC2-interact"/>
    <property type="match status" value="1"/>
</dbReference>
<dbReference type="Pfam" id="PF08831">
    <property type="entry name" value="MHCassoc_trimer"/>
    <property type="match status" value="1"/>
</dbReference>
<dbReference type="Pfam" id="PF00086">
    <property type="entry name" value="Thyroglobulin_1"/>
    <property type="match status" value="1"/>
</dbReference>
<dbReference type="PIRSF" id="PIRSF001992">
    <property type="entry name" value="CD74_antigen"/>
    <property type="match status" value="1"/>
</dbReference>
<dbReference type="PRINTS" id="PR01990">
    <property type="entry name" value="CD74ANTIGEN"/>
</dbReference>
<dbReference type="SMART" id="SM00211">
    <property type="entry name" value="TY"/>
    <property type="match status" value="1"/>
</dbReference>
<dbReference type="SUPFAM" id="SSF48305">
    <property type="entry name" value="Class II MHC-associated invariant chain ectoplasmic trimerization domain"/>
    <property type="match status" value="1"/>
</dbReference>
<dbReference type="SUPFAM" id="SSF57610">
    <property type="entry name" value="Thyroglobulin type-1 domain"/>
    <property type="match status" value="1"/>
</dbReference>
<dbReference type="PROSITE" id="PS00484">
    <property type="entry name" value="THYROGLOBULIN_1_1"/>
    <property type="match status" value="1"/>
</dbReference>
<dbReference type="PROSITE" id="PS51162">
    <property type="entry name" value="THYROGLOBULIN_1_2"/>
    <property type="match status" value="1"/>
</dbReference>
<name>HG2A_RAT</name>
<evidence type="ECO:0000250" key="1"/>
<evidence type="ECO:0000250" key="2">
    <source>
        <dbReference type="UniProtKB" id="P04233"/>
    </source>
</evidence>
<evidence type="ECO:0000250" key="3">
    <source>
        <dbReference type="UniProtKB" id="P04441"/>
    </source>
</evidence>
<evidence type="ECO:0000255" key="4"/>
<evidence type="ECO:0000255" key="5">
    <source>
        <dbReference type="PROSITE-ProRule" id="PRU00500"/>
    </source>
</evidence>
<evidence type="ECO:0000256" key="6">
    <source>
        <dbReference type="SAM" id="MobiDB-lite"/>
    </source>
</evidence>
<evidence type="ECO:0000305" key="7"/>
<evidence type="ECO:0000312" key="8">
    <source>
        <dbReference type="RGD" id="2313"/>
    </source>
</evidence>
<evidence type="ECO:0007744" key="9">
    <source>
    </source>
</evidence>
<gene>
    <name evidence="8" type="primary">Cd74</name>
</gene>
<reference key="1">
    <citation type="journal article" date="1989" name="Nucleic Acids Res.">
        <title>Sequence of a rat MHC class II-associated invariant chain cDNA clone containing a 64 amino acid thyroglobulin-like domain.</title>
        <authorList>
            <person name="McKnight A.J."/>
            <person name="Mason D.W."/>
            <person name="Barclay A.N."/>
        </authorList>
    </citation>
    <scope>NUCLEOTIDE SEQUENCE [MRNA]</scope>
    <source>
        <strain>PVG X DA</strain>
        <tissue>Spleen</tissue>
    </source>
</reference>
<reference key="2">
    <citation type="journal article" date="1988" name="Nucleic Acids Res.">
        <title>Nucleotide sequence of rat invariant gamma chain cDNA clone pLR gamma 34.3.</title>
        <authorList>
            <person name="Henkes W."/>
            <person name="Syha J."/>
            <person name="Reske K."/>
        </authorList>
    </citation>
    <scope>NUCLEOTIDE SEQUENCE [MRNA] OF 1-192 AND 257-280</scope>
    <source>
        <strain>Lewis</strain>
    </source>
</reference>
<reference key="3">
    <citation type="journal article" date="2012" name="Nat. Commun.">
        <title>Quantitative maps of protein phosphorylation sites across 14 different rat organs and tissues.</title>
        <authorList>
            <person name="Lundby A."/>
            <person name="Secher A."/>
            <person name="Lage K."/>
            <person name="Nordsborg N.B."/>
            <person name="Dmytriyev A."/>
            <person name="Lundby C."/>
            <person name="Olsen J.V."/>
        </authorList>
    </citation>
    <scope>PHOSPHORYLATION [LARGE SCALE ANALYSIS] AT SER-9</scope>
    <scope>IDENTIFICATION BY MASS SPECTROMETRY [LARGE SCALE ANALYSIS]</scope>
</reference>
<feature type="chain" id="PRO_0000067956" description="H-2 class II histocompatibility antigen gamma chain">
    <location>
        <begin position="1"/>
        <end position="280"/>
    </location>
</feature>
<feature type="peptide" id="PRO_0000448888" description="Class-II-associated invariant chain peptide" evidence="2">
    <location>
        <begin position="81"/>
        <end position="104"/>
    </location>
</feature>
<feature type="topological domain" description="Cytoplasmic" evidence="4">
    <location>
        <begin position="1"/>
        <end position="30"/>
    </location>
</feature>
<feature type="transmembrane region" description="Helical; Signal-anchor for type II membrane protein" evidence="4">
    <location>
        <begin position="31"/>
        <end position="56"/>
    </location>
</feature>
<feature type="topological domain" description="Extracellular" evidence="4">
    <location>
        <begin position="57"/>
        <end position="280"/>
    </location>
</feature>
<feature type="domain" description="Thyroglobulin type-1" evidence="5">
    <location>
        <begin position="194"/>
        <end position="255"/>
    </location>
</feature>
<feature type="region of interest" description="Disordered" evidence="6">
    <location>
        <begin position="246"/>
        <end position="268"/>
    </location>
</feature>
<feature type="modified residue" description="Phosphoserine" evidence="9">
    <location>
        <position position="9"/>
    </location>
</feature>
<feature type="glycosylation site" description="N-linked (GlcNAc...) asparagine" evidence="4">
    <location>
        <position position="114"/>
    </location>
</feature>
<feature type="glycosylation site" description="N-linked (GlcNAc...) asparagine" evidence="4">
    <location>
        <position position="120"/>
    </location>
</feature>
<feature type="glycosylation site" description="O-linked (Xyl...) (chondroitin sulfate) serine" evidence="2">
    <location>
        <position position="266"/>
    </location>
</feature>
<feature type="disulfide bond" evidence="5">
    <location>
        <begin position="197"/>
        <end position="216"/>
    </location>
</feature>
<feature type="disulfide bond" evidence="5">
    <location>
        <begin position="227"/>
        <end position="234"/>
    </location>
</feature>
<feature type="disulfide bond" evidence="5">
    <location>
        <begin position="236"/>
        <end position="255"/>
    </location>
</feature>
<feature type="splice variant" id="VSP_005333" description="In isoform Short." evidence="7">
    <location>
        <begin position="193"/>
        <end position="256"/>
    </location>
</feature>
<proteinExistence type="evidence at protein level"/>
<comment type="function">
    <text evidence="3">Plays a critical role in MHC class II antigen processing by stabilizing peptide-free class II alpha/beta heterodimers in a complex soon after their synthesis and directing transport of the complex from the endoplasmic reticulum to compartments where peptide loading of class II takes place. Enhance also the stimulation of T-cell responses through interaction with CD44.</text>
</comment>
<comment type="function">
    <molecule>Class-II-associated invariant chain peptide</molecule>
    <text evidence="2">Binds to the peptide-binding site of MHC class II alpha/beta heterodimers forming an alpha-beta-CLIP complex, thereby preventing the loading of antigenic peptides to the MHC class II complex until its release by HLA-DM in the endosome.</text>
</comment>
<comment type="function">
    <molecule>Isoform Long</molecule>
    <text evidence="3">Stabilizes the conformation of mature CTSL by binding to its active site and serving as a chaperone to help maintain a pool of mature enzyme in endocytic compartments and extracellular space of antigen-presenting cells (APCs).</text>
</comment>
<comment type="subunit">
    <text evidence="1 3">Nonamer composed of three alpha/beta/gamma heterotrimers. Interacts with CD44; this complex is essential for the MIF-induced signaling cascade that results in B cell survival.</text>
</comment>
<comment type="subunit">
    <molecule>Isoform Long</molecule>
    <text evidence="3">Interacts with the mature form of CTSL; the complex survive in neutral pH environment.</text>
</comment>
<comment type="subcellular location">
    <molecule>Isoform Long</molecule>
    <subcellularLocation>
        <location evidence="3">Late endosome</location>
    </subcellularLocation>
    <subcellularLocation>
        <location evidence="3">Lysosome</location>
    </subcellularLocation>
</comment>
<comment type="subcellular location">
    <subcellularLocation>
        <location evidence="2">Cell membrane</location>
        <topology evidence="2">Single-pass type II membrane protein</topology>
    </subcellularLocation>
    <subcellularLocation>
        <location evidence="2">Endoplasmic reticulum membrane</location>
    </subcellularLocation>
    <subcellularLocation>
        <location evidence="2">Golgi apparatus</location>
        <location evidence="2">trans-Golgi network</location>
    </subcellularLocation>
    <subcellularLocation>
        <location evidence="2">Endosome</location>
    </subcellularLocation>
    <subcellularLocation>
        <location evidence="2">Lysosome</location>
    </subcellularLocation>
    <subcellularLocation>
        <location evidence="2">Secreted</location>
    </subcellularLocation>
    <text evidence="2">Transits through a number of intracellular compartments in the endocytic pathway. It can either undergo proteolysis or reach the cell membrane.</text>
</comment>
<comment type="alternative products">
    <event type="alternative splicing"/>
    <isoform>
        <id>P10247-1</id>
        <name>Long</name>
        <sequence type="displayed"/>
    </isoform>
    <isoform>
        <id>P10247-2</id>
        <name>Short</name>
        <sequence type="described" ref="VSP_005333"/>
    </isoform>
</comment>
<accession>P10247</accession>
<keyword id="KW-1064">Adaptive immunity</keyword>
<keyword id="KW-0025">Alternative splicing</keyword>
<keyword id="KW-1003">Cell membrane</keyword>
<keyword id="KW-0143">Chaperone</keyword>
<keyword id="KW-1015">Disulfide bond</keyword>
<keyword id="KW-0256">Endoplasmic reticulum</keyword>
<keyword id="KW-0967">Endosome</keyword>
<keyword id="KW-0325">Glycoprotein</keyword>
<keyword id="KW-0333">Golgi apparatus</keyword>
<keyword id="KW-0391">Immunity</keyword>
<keyword id="KW-0458">Lysosome</keyword>
<keyword id="KW-0472">Membrane</keyword>
<keyword id="KW-0597">Phosphoprotein</keyword>
<keyword id="KW-0654">Proteoglycan</keyword>
<keyword id="KW-1185">Reference proteome</keyword>
<keyword id="KW-0964">Secreted</keyword>
<keyword id="KW-0735">Signal-anchor</keyword>
<keyword id="KW-0812">Transmembrane</keyword>
<keyword id="KW-1133">Transmembrane helix</keyword>
<sequence>MDDQRDLISNHEQLPILGQRARAPESNCNRGVLYTSVSVLVALLLAGQATTAYFLYQQQGRLDKLTVTSQNLQLENLRMKLPKSAKPVSPMRMATPLLMRPLSMDNMLQAPVKNVTKYGNMTQDHVMHLLTKSGPVNYPQLKGSFPENLKHLKNSMNGLDWKVFESWMKQWLLFEMSKNSLEEKQPTQTPPKVLTKCQEEVSHIPDVHPGAFRPKCDENGNYMPLQCHGSTGYCWCVFPNGTEVPHTKSRGRHNCSEPLDMEDPSSGLGVTKQDMGQMFL</sequence>